<evidence type="ECO:0000255" key="1">
    <source>
        <dbReference type="HAMAP-Rule" id="MF_01334"/>
    </source>
</evidence>
<evidence type="ECO:0000256" key="2">
    <source>
        <dbReference type="SAM" id="MobiDB-lite"/>
    </source>
</evidence>
<evidence type="ECO:0000305" key="3"/>
<proteinExistence type="inferred from homology"/>
<comment type="function">
    <text evidence="1">This is one of the proteins that binds to the 5S RNA in the ribosome where it forms part of the central protuberance.</text>
</comment>
<comment type="subunit">
    <text evidence="1">Part of the 50S ribosomal subunit; part of the 5S rRNA/L5/L18/L25 subcomplex. Contacts the 5S rRNA. Binds to the 5S rRNA independently of L5 and L18.</text>
</comment>
<comment type="similarity">
    <text evidence="1">Belongs to the bacterial ribosomal protein bL25 family. CTC subfamily.</text>
</comment>
<accession>Q5QV04</accession>
<organism>
    <name type="scientific">Idiomarina loihiensis (strain ATCC BAA-735 / DSM 15497 / L2-TR)</name>
    <dbReference type="NCBI Taxonomy" id="283942"/>
    <lineage>
        <taxon>Bacteria</taxon>
        <taxon>Pseudomonadati</taxon>
        <taxon>Pseudomonadota</taxon>
        <taxon>Gammaproteobacteria</taxon>
        <taxon>Alteromonadales</taxon>
        <taxon>Idiomarinaceae</taxon>
        <taxon>Idiomarina</taxon>
    </lineage>
</organism>
<keyword id="KW-1185">Reference proteome</keyword>
<keyword id="KW-0687">Ribonucleoprotein</keyword>
<keyword id="KW-0689">Ribosomal protein</keyword>
<keyword id="KW-0694">RNA-binding</keyword>
<keyword id="KW-0699">rRNA-binding</keyword>
<protein>
    <recommendedName>
        <fullName evidence="1">Large ribosomal subunit protein bL25</fullName>
    </recommendedName>
    <alternativeName>
        <fullName evidence="3">50S ribosomal protein L25</fullName>
    </alternativeName>
    <alternativeName>
        <fullName evidence="1">General stress protein CTC</fullName>
    </alternativeName>
</protein>
<dbReference type="EMBL" id="AE017340">
    <property type="protein sequence ID" value="AAV81770.1"/>
    <property type="molecule type" value="Genomic_DNA"/>
</dbReference>
<dbReference type="RefSeq" id="WP_011234181.1">
    <property type="nucleotide sequence ID" value="NC_006512.1"/>
</dbReference>
<dbReference type="SMR" id="Q5QV04"/>
<dbReference type="STRING" id="283942.IL0930"/>
<dbReference type="GeneID" id="41336085"/>
<dbReference type="KEGG" id="ilo:IL0930"/>
<dbReference type="eggNOG" id="COG1825">
    <property type="taxonomic scope" value="Bacteria"/>
</dbReference>
<dbReference type="HOGENOM" id="CLU_075939_0_1_6"/>
<dbReference type="OrthoDB" id="9806411at2"/>
<dbReference type="Proteomes" id="UP000001171">
    <property type="component" value="Chromosome"/>
</dbReference>
<dbReference type="GO" id="GO:0022625">
    <property type="term" value="C:cytosolic large ribosomal subunit"/>
    <property type="evidence" value="ECO:0007669"/>
    <property type="project" value="TreeGrafter"/>
</dbReference>
<dbReference type="GO" id="GO:0008097">
    <property type="term" value="F:5S rRNA binding"/>
    <property type="evidence" value="ECO:0007669"/>
    <property type="project" value="InterPro"/>
</dbReference>
<dbReference type="GO" id="GO:0003735">
    <property type="term" value="F:structural constituent of ribosome"/>
    <property type="evidence" value="ECO:0007669"/>
    <property type="project" value="InterPro"/>
</dbReference>
<dbReference type="GO" id="GO:0006412">
    <property type="term" value="P:translation"/>
    <property type="evidence" value="ECO:0007669"/>
    <property type="project" value="UniProtKB-UniRule"/>
</dbReference>
<dbReference type="CDD" id="cd00495">
    <property type="entry name" value="Ribosomal_L25_TL5_CTC"/>
    <property type="match status" value="1"/>
</dbReference>
<dbReference type="FunFam" id="2.40.240.10:FF:000002">
    <property type="entry name" value="50S ribosomal protein L25"/>
    <property type="match status" value="1"/>
</dbReference>
<dbReference type="Gene3D" id="2.170.120.20">
    <property type="entry name" value="Ribosomal protein L25, beta domain"/>
    <property type="match status" value="1"/>
</dbReference>
<dbReference type="Gene3D" id="2.40.240.10">
    <property type="entry name" value="Ribosomal Protein L25, Chain P"/>
    <property type="match status" value="1"/>
</dbReference>
<dbReference type="HAMAP" id="MF_01336">
    <property type="entry name" value="Ribosomal_bL25"/>
    <property type="match status" value="1"/>
</dbReference>
<dbReference type="HAMAP" id="MF_01334">
    <property type="entry name" value="Ribosomal_bL25_CTC"/>
    <property type="match status" value="1"/>
</dbReference>
<dbReference type="InterPro" id="IPR020056">
    <property type="entry name" value="Rbsml_bL25/Gln-tRNA_synth_N"/>
</dbReference>
<dbReference type="InterPro" id="IPR011035">
    <property type="entry name" value="Ribosomal_bL25/Gln-tRNA_synth"/>
</dbReference>
<dbReference type="InterPro" id="IPR020057">
    <property type="entry name" value="Ribosomal_bL25_b-dom"/>
</dbReference>
<dbReference type="InterPro" id="IPR037121">
    <property type="entry name" value="Ribosomal_bL25_C"/>
</dbReference>
<dbReference type="InterPro" id="IPR001021">
    <property type="entry name" value="Ribosomal_bL25_long"/>
</dbReference>
<dbReference type="InterPro" id="IPR020055">
    <property type="entry name" value="Ribosomal_bL25_short"/>
</dbReference>
<dbReference type="InterPro" id="IPR029751">
    <property type="entry name" value="Ribosomal_L25_dom"/>
</dbReference>
<dbReference type="InterPro" id="IPR020930">
    <property type="entry name" value="Ribosomal_uL5_bac-type"/>
</dbReference>
<dbReference type="NCBIfam" id="TIGR00731">
    <property type="entry name" value="bL25_bact_ctc"/>
    <property type="match status" value="1"/>
</dbReference>
<dbReference type="NCBIfam" id="NF004128">
    <property type="entry name" value="PRK05618.1-2"/>
    <property type="match status" value="1"/>
</dbReference>
<dbReference type="NCBIfam" id="NF004130">
    <property type="entry name" value="PRK05618.1-5"/>
    <property type="match status" value="1"/>
</dbReference>
<dbReference type="NCBIfam" id="NF004612">
    <property type="entry name" value="PRK05943.1"/>
    <property type="match status" value="1"/>
</dbReference>
<dbReference type="PANTHER" id="PTHR33284">
    <property type="entry name" value="RIBOSOMAL PROTEIN L25/GLN-TRNA SYNTHETASE, ANTI-CODON-BINDING DOMAIN-CONTAINING PROTEIN"/>
    <property type="match status" value="1"/>
</dbReference>
<dbReference type="PANTHER" id="PTHR33284:SF1">
    <property type="entry name" value="RIBOSOMAL PROTEIN L25_GLN-TRNA SYNTHETASE, ANTI-CODON-BINDING DOMAIN-CONTAINING PROTEIN"/>
    <property type="match status" value="1"/>
</dbReference>
<dbReference type="Pfam" id="PF01386">
    <property type="entry name" value="Ribosomal_L25p"/>
    <property type="match status" value="1"/>
</dbReference>
<dbReference type="Pfam" id="PF14693">
    <property type="entry name" value="Ribosomal_TL5_C"/>
    <property type="match status" value="1"/>
</dbReference>
<dbReference type="SUPFAM" id="SSF50715">
    <property type="entry name" value="Ribosomal protein L25-like"/>
    <property type="match status" value="1"/>
</dbReference>
<name>RL25_IDILO</name>
<reference key="1">
    <citation type="journal article" date="2004" name="Proc. Natl. Acad. Sci. U.S.A.">
        <title>Genome sequence of the deep-sea gamma-proteobacterium Idiomarina loihiensis reveals amino acid fermentation as a source of carbon and energy.</title>
        <authorList>
            <person name="Hou S."/>
            <person name="Saw J.H."/>
            <person name="Lee K.S."/>
            <person name="Freitas T.A."/>
            <person name="Belisle C."/>
            <person name="Kawarabayasi Y."/>
            <person name="Donachie S.P."/>
            <person name="Pikina A."/>
            <person name="Galperin M.Y."/>
            <person name="Koonin E.V."/>
            <person name="Makarova K.S."/>
            <person name="Omelchenko M.V."/>
            <person name="Sorokin A."/>
            <person name="Wolf Y.I."/>
            <person name="Li Q.X."/>
            <person name="Keum Y.S."/>
            <person name="Campbell S."/>
            <person name="Denery J."/>
            <person name="Aizawa S."/>
            <person name="Shibata S."/>
            <person name="Malahoff A."/>
            <person name="Alam M."/>
        </authorList>
    </citation>
    <scope>NUCLEOTIDE SEQUENCE [LARGE SCALE GENOMIC DNA]</scope>
    <source>
        <strain>ATCC BAA-735 / DSM 15497 / L2-TR</strain>
    </source>
</reference>
<sequence length="221" mass="24687">MAELDFNIQATVRTDKGKGASRRLRHEDKVPAILYGGQGEPIALALDHNKVNNMADYEAFYSHIVTLEFDGKKHQAILKDMQRHPYKPKLTHLDFQRVEKGHKLHTNLPLHFLNETTAKGVKEEGGVVVHHVNDVEITVLPKDLPEYLEVDIAELSVGDTIHLTDLKLPKGVELVELTKGEDHDQAVVSITAPRVEKEETEEDTVAPGDVPAENSKDADEE</sequence>
<feature type="chain" id="PRO_0000181556" description="Large ribosomal subunit protein bL25">
    <location>
        <begin position="1"/>
        <end position="221"/>
    </location>
</feature>
<feature type="region of interest" description="Disordered" evidence="2">
    <location>
        <begin position="192"/>
        <end position="221"/>
    </location>
</feature>
<gene>
    <name evidence="1" type="primary">rplY</name>
    <name evidence="1" type="synonym">ctc</name>
    <name type="ordered locus">IL0930</name>
</gene>